<comment type="function">
    <text evidence="1">Na(+)/H(+) antiporter that extrudes sodium in exchange for external protons.</text>
</comment>
<comment type="catalytic activity">
    <reaction evidence="1">
        <text>Na(+)(in) + 2 H(+)(out) = Na(+)(out) + 2 H(+)(in)</text>
        <dbReference type="Rhea" id="RHEA:29251"/>
        <dbReference type="ChEBI" id="CHEBI:15378"/>
        <dbReference type="ChEBI" id="CHEBI:29101"/>
    </reaction>
    <physiologicalReaction direction="left-to-right" evidence="1">
        <dbReference type="Rhea" id="RHEA:29252"/>
    </physiologicalReaction>
</comment>
<comment type="subcellular location">
    <subcellularLocation>
        <location evidence="1">Cell inner membrane</location>
        <topology evidence="1">Multi-pass membrane protein</topology>
    </subcellularLocation>
</comment>
<comment type="similarity">
    <text evidence="1">Belongs to the NhaA Na(+)/H(+) (TC 2.A.33) antiporter family.</text>
</comment>
<reference key="1">
    <citation type="submission" date="2006-09" db="EMBL/GenBank/DDBJ databases">
        <title>Complete sequence of chromosome 1 of Shewanella sp. ANA-3.</title>
        <authorList>
            <person name="Copeland A."/>
            <person name="Lucas S."/>
            <person name="Lapidus A."/>
            <person name="Barry K."/>
            <person name="Detter J.C."/>
            <person name="Glavina del Rio T."/>
            <person name="Hammon N."/>
            <person name="Israni S."/>
            <person name="Dalin E."/>
            <person name="Tice H."/>
            <person name="Pitluck S."/>
            <person name="Chertkov O."/>
            <person name="Brettin T."/>
            <person name="Bruce D."/>
            <person name="Han C."/>
            <person name="Tapia R."/>
            <person name="Gilna P."/>
            <person name="Schmutz J."/>
            <person name="Larimer F."/>
            <person name="Land M."/>
            <person name="Hauser L."/>
            <person name="Kyrpides N."/>
            <person name="Kim E."/>
            <person name="Newman D."/>
            <person name="Salticov C."/>
            <person name="Konstantinidis K."/>
            <person name="Klappenback J."/>
            <person name="Tiedje J."/>
            <person name="Richardson P."/>
        </authorList>
    </citation>
    <scope>NUCLEOTIDE SEQUENCE [LARGE SCALE GENOMIC DNA]</scope>
    <source>
        <strain>ANA-3</strain>
    </source>
</reference>
<organism>
    <name type="scientific">Shewanella sp. (strain ANA-3)</name>
    <dbReference type="NCBI Taxonomy" id="94122"/>
    <lineage>
        <taxon>Bacteria</taxon>
        <taxon>Pseudomonadati</taxon>
        <taxon>Pseudomonadota</taxon>
        <taxon>Gammaproteobacteria</taxon>
        <taxon>Alteromonadales</taxon>
        <taxon>Shewanellaceae</taxon>
        <taxon>Shewanella</taxon>
    </lineage>
</organism>
<accession>A0KZP4</accession>
<protein>
    <recommendedName>
        <fullName evidence="1">Na(+)/H(+) antiporter NhaA</fullName>
    </recommendedName>
    <alternativeName>
        <fullName evidence="1">Sodium/proton antiporter NhaA</fullName>
    </alternativeName>
</protein>
<gene>
    <name evidence="1" type="primary">nhaA</name>
    <name type="ordered locus">Shewana3_3038</name>
</gene>
<name>NHAA_SHESA</name>
<sequence length="389" mass="40708">MEKAIRNFLSQESAGGILLLVAVVLAMLMANSPLAGLYQGFLGTEVQVRVGALDLHKPLLLWINDGLMALFFLLIGLEVKRELLEGALSSVAQASLPTFAAIGGMLVPAGIYLLFNYGDPVTQVGWAIPAATDIAFALGIMALLGSRVPVALKVFLLALAIIDDLGVIVIIALFYSSDLSTISLIIASIAIVGLVALNRKGVTALAPYGVLGLVLWVAVLKSGVHATLAGVIIAFCIPLRAKDGSSPSEHLEHSLHPWSTFLILPVFAFANAGVALGNMSLDALISPVPVGIALGLMLGKPIGVMLFSYVAVKLKLAQLPDGIGWKQIAPVAAMCGIGFTMSMFIASLAFEQADPMFGDLARLGTLIGSILAALIGYFWLSKVLPKKGV</sequence>
<feature type="chain" id="PRO_0000334431" description="Na(+)/H(+) antiporter NhaA">
    <location>
        <begin position="1"/>
        <end position="389"/>
    </location>
</feature>
<feature type="transmembrane region" description="Helical" evidence="1">
    <location>
        <begin position="17"/>
        <end position="37"/>
    </location>
</feature>
<feature type="transmembrane region" description="Helical" evidence="1">
    <location>
        <begin position="59"/>
        <end position="79"/>
    </location>
</feature>
<feature type="transmembrane region" description="Helical" evidence="1">
    <location>
        <begin position="95"/>
        <end position="115"/>
    </location>
</feature>
<feature type="transmembrane region" description="Helical" evidence="1">
    <location>
        <begin position="124"/>
        <end position="144"/>
    </location>
</feature>
<feature type="transmembrane region" description="Helical" evidence="1">
    <location>
        <begin position="154"/>
        <end position="174"/>
    </location>
</feature>
<feature type="transmembrane region" description="Helical" evidence="1">
    <location>
        <begin position="177"/>
        <end position="197"/>
    </location>
</feature>
<feature type="transmembrane region" description="Helical" evidence="1">
    <location>
        <begin position="213"/>
        <end position="233"/>
    </location>
</feature>
<feature type="transmembrane region" description="Helical" evidence="1">
    <location>
        <begin position="261"/>
        <end position="281"/>
    </location>
</feature>
<feature type="transmembrane region" description="Helical" evidence="1">
    <location>
        <begin position="287"/>
        <end position="307"/>
    </location>
</feature>
<feature type="transmembrane region" description="Helical" evidence="1">
    <location>
        <begin position="328"/>
        <end position="348"/>
    </location>
</feature>
<feature type="transmembrane region" description="Helical" evidence="1">
    <location>
        <begin position="363"/>
        <end position="383"/>
    </location>
</feature>
<dbReference type="EMBL" id="CP000469">
    <property type="protein sequence ID" value="ABK49263.1"/>
    <property type="molecule type" value="Genomic_DNA"/>
</dbReference>
<dbReference type="RefSeq" id="WP_011717883.1">
    <property type="nucleotide sequence ID" value="NC_008577.1"/>
</dbReference>
<dbReference type="SMR" id="A0KZP4"/>
<dbReference type="STRING" id="94122.Shewana3_3038"/>
<dbReference type="KEGG" id="shn:Shewana3_3038"/>
<dbReference type="eggNOG" id="COG3004">
    <property type="taxonomic scope" value="Bacteria"/>
</dbReference>
<dbReference type="HOGENOM" id="CLU_015803_1_0_6"/>
<dbReference type="OrthoDB" id="9808135at2"/>
<dbReference type="Proteomes" id="UP000002589">
    <property type="component" value="Chromosome"/>
</dbReference>
<dbReference type="GO" id="GO:0005886">
    <property type="term" value="C:plasma membrane"/>
    <property type="evidence" value="ECO:0007669"/>
    <property type="project" value="UniProtKB-SubCell"/>
</dbReference>
<dbReference type="GO" id="GO:0015385">
    <property type="term" value="F:sodium:proton antiporter activity"/>
    <property type="evidence" value="ECO:0007669"/>
    <property type="project" value="TreeGrafter"/>
</dbReference>
<dbReference type="GO" id="GO:0006885">
    <property type="term" value="P:regulation of pH"/>
    <property type="evidence" value="ECO:0007669"/>
    <property type="project" value="InterPro"/>
</dbReference>
<dbReference type="Gene3D" id="1.20.1530.10">
    <property type="entry name" value="Na+/H+ antiporter like domain"/>
    <property type="match status" value="1"/>
</dbReference>
<dbReference type="HAMAP" id="MF_01844">
    <property type="entry name" value="NhaA"/>
    <property type="match status" value="1"/>
</dbReference>
<dbReference type="InterPro" id="IPR023171">
    <property type="entry name" value="Na/H_antiporter_dom_sf"/>
</dbReference>
<dbReference type="InterPro" id="IPR004670">
    <property type="entry name" value="NhaA"/>
</dbReference>
<dbReference type="NCBIfam" id="TIGR00773">
    <property type="entry name" value="NhaA"/>
    <property type="match status" value="1"/>
</dbReference>
<dbReference type="NCBIfam" id="NF007111">
    <property type="entry name" value="PRK09560.1"/>
    <property type="match status" value="1"/>
</dbReference>
<dbReference type="NCBIfam" id="NF007112">
    <property type="entry name" value="PRK09561.1"/>
    <property type="match status" value="1"/>
</dbReference>
<dbReference type="PANTHER" id="PTHR30341:SF0">
    <property type="entry name" value="NA(+)_H(+) ANTIPORTER NHAA"/>
    <property type="match status" value="1"/>
</dbReference>
<dbReference type="PANTHER" id="PTHR30341">
    <property type="entry name" value="SODIUM ION/PROTON ANTIPORTER NHAA-RELATED"/>
    <property type="match status" value="1"/>
</dbReference>
<dbReference type="Pfam" id="PF06965">
    <property type="entry name" value="Na_H_antiport_1"/>
    <property type="match status" value="1"/>
</dbReference>
<keyword id="KW-0050">Antiport</keyword>
<keyword id="KW-0997">Cell inner membrane</keyword>
<keyword id="KW-1003">Cell membrane</keyword>
<keyword id="KW-0406">Ion transport</keyword>
<keyword id="KW-0472">Membrane</keyword>
<keyword id="KW-0915">Sodium</keyword>
<keyword id="KW-0739">Sodium transport</keyword>
<keyword id="KW-0812">Transmembrane</keyword>
<keyword id="KW-1133">Transmembrane helix</keyword>
<keyword id="KW-0813">Transport</keyword>
<evidence type="ECO:0000255" key="1">
    <source>
        <dbReference type="HAMAP-Rule" id="MF_01844"/>
    </source>
</evidence>
<proteinExistence type="inferred from homology"/>